<comment type="function">
    <text evidence="1">Excises ethenocytosine and uracil, which can arise by alkylation or deamination of cytosine, respectively, from the corresponding mispairs with guanine in ds-DNA. It is capable of hydrolyzing the carbon-nitrogen bond between the sugar-phosphate backbone of the DNA and the mispaired base. The complementary strand guanine functions in substrate recognition. Required for DNA damage lesion repair in stationary-phase cells.</text>
</comment>
<comment type="catalytic activity">
    <reaction evidence="1">
        <text>Specifically hydrolyzes mismatched double-stranded DNA and polynucleotides, releasing free uracil.</text>
        <dbReference type="EC" id="3.2.2.28"/>
    </reaction>
</comment>
<comment type="subunit">
    <text evidence="1">Binds DNA as a monomer.</text>
</comment>
<comment type="subcellular location">
    <subcellularLocation>
        <location evidence="1">Cytoplasm</location>
    </subcellularLocation>
</comment>
<comment type="similarity">
    <text evidence="1">Belongs to the uracil-DNA glycosylase (UDG) superfamily. TDG/mug family.</text>
</comment>
<organism>
    <name type="scientific">Salmonella paratyphi C (strain RKS4594)</name>
    <dbReference type="NCBI Taxonomy" id="476213"/>
    <lineage>
        <taxon>Bacteria</taxon>
        <taxon>Pseudomonadati</taxon>
        <taxon>Pseudomonadota</taxon>
        <taxon>Gammaproteobacteria</taxon>
        <taxon>Enterobacterales</taxon>
        <taxon>Enterobacteriaceae</taxon>
        <taxon>Salmonella</taxon>
    </lineage>
</organism>
<evidence type="ECO:0000255" key="1">
    <source>
        <dbReference type="HAMAP-Rule" id="MF_01956"/>
    </source>
</evidence>
<protein>
    <recommendedName>
        <fullName evidence="1">G/U mismatch-specific DNA glycosylase</fullName>
        <ecNumber evidence="1">3.2.2.28</ecNumber>
    </recommendedName>
    <alternativeName>
        <fullName evidence="1">Double-strand-specific uracil glycosylase</fullName>
    </alternativeName>
    <alternativeName>
        <fullName evidence="1">Mismatch-specific uracil DNA-glycosylase</fullName>
        <shortName evidence="1">MUG</shortName>
    </alternativeName>
</protein>
<dbReference type="EC" id="3.2.2.28" evidence="1"/>
<dbReference type="EMBL" id="CP000857">
    <property type="protein sequence ID" value="ACN47373.1"/>
    <property type="molecule type" value="Genomic_DNA"/>
</dbReference>
<dbReference type="RefSeq" id="WP_000237776.1">
    <property type="nucleotide sequence ID" value="NC_012125.1"/>
</dbReference>
<dbReference type="SMR" id="C0PYY5"/>
<dbReference type="KEGG" id="sei:SPC_3288"/>
<dbReference type="HOGENOM" id="CLU_042829_3_1_6"/>
<dbReference type="Proteomes" id="UP000001599">
    <property type="component" value="Chromosome"/>
</dbReference>
<dbReference type="GO" id="GO:0005737">
    <property type="term" value="C:cytoplasm"/>
    <property type="evidence" value="ECO:0007669"/>
    <property type="project" value="UniProtKB-SubCell"/>
</dbReference>
<dbReference type="GO" id="GO:0003677">
    <property type="term" value="F:DNA binding"/>
    <property type="evidence" value="ECO:0007669"/>
    <property type="project" value="UniProtKB-KW"/>
</dbReference>
<dbReference type="GO" id="GO:0008263">
    <property type="term" value="F:pyrimidine-specific mismatch base pair DNA N-glycosylase activity"/>
    <property type="evidence" value="ECO:0007669"/>
    <property type="project" value="UniProtKB-UniRule"/>
</dbReference>
<dbReference type="GO" id="GO:0004844">
    <property type="term" value="F:uracil DNA N-glycosylase activity"/>
    <property type="evidence" value="ECO:0007669"/>
    <property type="project" value="TreeGrafter"/>
</dbReference>
<dbReference type="GO" id="GO:0006285">
    <property type="term" value="P:base-excision repair, AP site formation"/>
    <property type="evidence" value="ECO:0007669"/>
    <property type="project" value="UniProtKB-UniRule"/>
</dbReference>
<dbReference type="CDD" id="cd10028">
    <property type="entry name" value="UDG-F2_TDG_MUG"/>
    <property type="match status" value="1"/>
</dbReference>
<dbReference type="Gene3D" id="3.40.470.10">
    <property type="entry name" value="Uracil-DNA glycosylase-like domain"/>
    <property type="match status" value="1"/>
</dbReference>
<dbReference type="HAMAP" id="MF_01956">
    <property type="entry name" value="MUG"/>
    <property type="match status" value="1"/>
</dbReference>
<dbReference type="InterPro" id="IPR015637">
    <property type="entry name" value="MUG/TDG"/>
</dbReference>
<dbReference type="InterPro" id="IPR023502">
    <property type="entry name" value="MUG_bact"/>
</dbReference>
<dbReference type="InterPro" id="IPR005122">
    <property type="entry name" value="Uracil-DNA_glycosylase-like"/>
</dbReference>
<dbReference type="InterPro" id="IPR036895">
    <property type="entry name" value="Uracil-DNA_glycosylase-like_sf"/>
</dbReference>
<dbReference type="NCBIfam" id="NF007570">
    <property type="entry name" value="PRK10201.1"/>
    <property type="match status" value="1"/>
</dbReference>
<dbReference type="PANTHER" id="PTHR12159">
    <property type="entry name" value="G/T AND G/U MISMATCH-SPECIFIC DNA GLYCOSYLASE"/>
    <property type="match status" value="1"/>
</dbReference>
<dbReference type="PANTHER" id="PTHR12159:SF9">
    <property type="entry name" value="G_T MISMATCH-SPECIFIC THYMINE DNA GLYCOSYLASE"/>
    <property type="match status" value="1"/>
</dbReference>
<dbReference type="Pfam" id="PF03167">
    <property type="entry name" value="UDG"/>
    <property type="match status" value="1"/>
</dbReference>
<dbReference type="SUPFAM" id="SSF52141">
    <property type="entry name" value="Uracil-DNA glycosylase-like"/>
    <property type="match status" value="1"/>
</dbReference>
<sequence length="168" mass="18650">MVKDILAPGLRVVFCGINPGLSSANTGFPFAHPANRFWKVIHLAGFTDRQLKPEEAEKLLDFRCGVTKLVDRPTVQATEVKLHELRSGGRNLIEKIEDYQPAALAVLGKQAFEQGFSQRGIAWGKQKIAIGATMVWVLPNPSGLNRIKTEKLVEAYRELDQALIMRGL</sequence>
<name>MUG_SALPC</name>
<feature type="chain" id="PRO_1000188968" description="G/U mismatch-specific DNA glycosylase">
    <location>
        <begin position="1"/>
        <end position="168"/>
    </location>
</feature>
<reference key="1">
    <citation type="journal article" date="2009" name="PLoS ONE">
        <title>Salmonella paratyphi C: genetic divergence from Salmonella choleraesuis and pathogenic convergence with Salmonella typhi.</title>
        <authorList>
            <person name="Liu W.-Q."/>
            <person name="Feng Y."/>
            <person name="Wang Y."/>
            <person name="Zou Q.-H."/>
            <person name="Chen F."/>
            <person name="Guo J.-T."/>
            <person name="Peng Y.-H."/>
            <person name="Jin Y."/>
            <person name="Li Y.-G."/>
            <person name="Hu S.-N."/>
            <person name="Johnston R.N."/>
            <person name="Liu G.-R."/>
            <person name="Liu S.-L."/>
        </authorList>
    </citation>
    <scope>NUCLEOTIDE SEQUENCE [LARGE SCALE GENOMIC DNA]</scope>
    <source>
        <strain>RKS4594</strain>
    </source>
</reference>
<keyword id="KW-0963">Cytoplasm</keyword>
<keyword id="KW-0227">DNA damage</keyword>
<keyword id="KW-0228">DNA excision</keyword>
<keyword id="KW-0234">DNA repair</keyword>
<keyword id="KW-0238">DNA-binding</keyword>
<keyword id="KW-0378">Hydrolase</keyword>
<gene>
    <name evidence="1" type="primary">mug</name>
    <name type="ordered locus">SPC_3288</name>
</gene>
<proteinExistence type="inferred from homology"/>
<accession>C0PYY5</accession>